<protein>
    <recommendedName>
        <fullName>MYND-type zinc finger protein samB</fullName>
    </recommendedName>
    <alternativeName>
        <fullName>Suppressor of anucleate metulae protein B</fullName>
    </alternativeName>
</protein>
<proteinExistence type="inferred from homology"/>
<accession>A1CBG9</accession>
<evidence type="ECO:0000250" key="1"/>
<evidence type="ECO:0000255" key="2">
    <source>
        <dbReference type="PROSITE-ProRule" id="PRU00134"/>
    </source>
</evidence>
<evidence type="ECO:0000256" key="3">
    <source>
        <dbReference type="SAM" id="MobiDB-lite"/>
    </source>
</evidence>
<evidence type="ECO:0000305" key="4"/>
<keyword id="KW-0963">Cytoplasm</keyword>
<keyword id="KW-0479">Metal-binding</keyword>
<keyword id="KW-1185">Reference proteome</keyword>
<keyword id="KW-0749">Sporulation</keyword>
<keyword id="KW-0862">Zinc</keyword>
<keyword id="KW-0863">Zinc-finger</keyword>
<gene>
    <name type="primary">samB</name>
    <name type="ORF">ACLA_015250</name>
</gene>
<dbReference type="EMBL" id="DS027049">
    <property type="protein sequence ID" value="EAW13087.1"/>
    <property type="molecule type" value="Genomic_DNA"/>
</dbReference>
<dbReference type="RefSeq" id="XP_001274513.1">
    <property type="nucleotide sequence ID" value="XM_001274512.1"/>
</dbReference>
<dbReference type="SMR" id="A1CBG9"/>
<dbReference type="EnsemblFungi" id="EAW13087">
    <property type="protein sequence ID" value="EAW13087"/>
    <property type="gene ID" value="ACLA_015250"/>
</dbReference>
<dbReference type="GeneID" id="4706354"/>
<dbReference type="KEGG" id="act:ACLA_015250"/>
<dbReference type="VEuPathDB" id="FungiDB:ACLA_015250"/>
<dbReference type="eggNOG" id="ENOG502QTM3">
    <property type="taxonomic scope" value="Eukaryota"/>
</dbReference>
<dbReference type="HOGENOM" id="CLU_014851_0_0_1"/>
<dbReference type="OMA" id="QDMQYWA"/>
<dbReference type="OrthoDB" id="5594178at2759"/>
<dbReference type="Proteomes" id="UP000006701">
    <property type="component" value="Unassembled WGS sequence"/>
</dbReference>
<dbReference type="GO" id="GO:0005737">
    <property type="term" value="C:cytoplasm"/>
    <property type="evidence" value="ECO:0007669"/>
    <property type="project" value="UniProtKB-SubCell"/>
</dbReference>
<dbReference type="GO" id="GO:1990304">
    <property type="term" value="C:MUB1-RAD6-UBR2 ubiquitin ligase complex"/>
    <property type="evidence" value="ECO:0007669"/>
    <property type="project" value="TreeGrafter"/>
</dbReference>
<dbReference type="GO" id="GO:0008270">
    <property type="term" value="F:zinc ion binding"/>
    <property type="evidence" value="ECO:0007669"/>
    <property type="project" value="UniProtKB-KW"/>
</dbReference>
<dbReference type="GO" id="GO:0007163">
    <property type="term" value="P:establishment or maintenance of cell polarity"/>
    <property type="evidence" value="ECO:0007669"/>
    <property type="project" value="TreeGrafter"/>
</dbReference>
<dbReference type="GO" id="GO:1900735">
    <property type="term" value="P:positive regulation of flocculation"/>
    <property type="evidence" value="ECO:0007669"/>
    <property type="project" value="EnsemblFungi"/>
</dbReference>
<dbReference type="GO" id="GO:0030435">
    <property type="term" value="P:sporulation resulting in formation of a cellular spore"/>
    <property type="evidence" value="ECO:0007669"/>
    <property type="project" value="UniProtKB-KW"/>
</dbReference>
<dbReference type="GO" id="GO:0006511">
    <property type="term" value="P:ubiquitin-dependent protein catabolic process"/>
    <property type="evidence" value="ECO:0007669"/>
    <property type="project" value="TreeGrafter"/>
</dbReference>
<dbReference type="FunFam" id="6.10.140.2220:FF:000003">
    <property type="entry name" value="MYND-type zinc finger protein"/>
    <property type="match status" value="1"/>
</dbReference>
<dbReference type="Gene3D" id="6.10.140.2220">
    <property type="match status" value="1"/>
</dbReference>
<dbReference type="InterPro" id="IPR016024">
    <property type="entry name" value="ARM-type_fold"/>
</dbReference>
<dbReference type="InterPro" id="IPR051664">
    <property type="entry name" value="MYND-type_zinc_finger"/>
</dbReference>
<dbReference type="InterPro" id="IPR002893">
    <property type="entry name" value="Znf_MYND"/>
</dbReference>
<dbReference type="PANTHER" id="PTHR47442">
    <property type="entry name" value="MYND-TYPE ZINC FINGER PROTEIN MUB1"/>
    <property type="match status" value="1"/>
</dbReference>
<dbReference type="PANTHER" id="PTHR47442:SF1">
    <property type="entry name" value="MYND-TYPE ZINC FINGER PROTEIN MUB1"/>
    <property type="match status" value="1"/>
</dbReference>
<dbReference type="Pfam" id="PF01753">
    <property type="entry name" value="zf-MYND"/>
    <property type="match status" value="1"/>
</dbReference>
<dbReference type="SUPFAM" id="SSF48371">
    <property type="entry name" value="ARM repeat"/>
    <property type="match status" value="1"/>
</dbReference>
<dbReference type="SUPFAM" id="SSF144232">
    <property type="entry name" value="HIT/MYND zinc finger-like"/>
    <property type="match status" value="1"/>
</dbReference>
<dbReference type="PROSITE" id="PS01360">
    <property type="entry name" value="ZF_MYND_1"/>
    <property type="match status" value="1"/>
</dbReference>
<dbReference type="PROSITE" id="PS50865">
    <property type="entry name" value="ZF_MYND_2"/>
    <property type="match status" value="1"/>
</dbReference>
<comment type="function">
    <text evidence="1">Involved in determination of the onset of polarized growth and morphogenesis. Plays a role in the regulation of branching in hyphae and spore formation (By similarity).</text>
</comment>
<comment type="subcellular location">
    <subcellularLocation>
        <location evidence="1">Cytoplasm</location>
    </subcellularLocation>
</comment>
<comment type="similarity">
    <text evidence="4">Belongs to the MUB1/samB family.</text>
</comment>
<sequence>MREVNFSIPNVNKASVNITTTLYDRRALDCTSTLPLINSLNHLAYLTTSSARIRDILTVDGGIERLVCILKEGRSGDLMEMWKWSLAFQCVVNIGVRGSESVRTRVVEADMVPVIATILDNYIKVVDKARARADSESHKQSSRHHPKSVPAPSDSSGRPAFLEQSSASENRTSRRQAPPPSIEIPPQPLFIDVTSPPRVPMTSPPERSTFGQDVHNHRTNDTRYAHPSHRHRTMQPLATALPPMDTADGFGLRPVRDNERLPSMLPALHTGLTSQPDSPTTPNAPVQPRSIAQATHARHRPSLRQQLSASGESDDGNGESSTMEDESTPAETAEPIVGLQNRMDIDDVGNREAIIGGVSESHDLTVTDPSEGQEAETFNITHRSTVDGSMINTDNAQNNAALGLSPAQAADTATSPALVPSPYSLYFRDRSTAAAQGVLTTMPRDEDVLMSLQLLAYVSKYCNLRSYFQNSHFVPKLKIDRELQMLEEGTSPIEPAEEEDEYLLPDDVNIFPLVEKFTVRHHSKDMQYWACVVMRNLCRKDEARGGIRQCAYYKCGKWEETARQFAKCRRCRRTKYCSKDCQKAAWVYHRHWCHSTP</sequence>
<name>MUB1_ASPCL</name>
<reference key="1">
    <citation type="journal article" date="2008" name="PLoS Genet.">
        <title>Genomic islands in the pathogenic filamentous fungus Aspergillus fumigatus.</title>
        <authorList>
            <person name="Fedorova N.D."/>
            <person name="Khaldi N."/>
            <person name="Joardar V.S."/>
            <person name="Maiti R."/>
            <person name="Amedeo P."/>
            <person name="Anderson M.J."/>
            <person name="Crabtree J."/>
            <person name="Silva J.C."/>
            <person name="Badger J.H."/>
            <person name="Albarraq A."/>
            <person name="Angiuoli S."/>
            <person name="Bussey H."/>
            <person name="Bowyer P."/>
            <person name="Cotty P.J."/>
            <person name="Dyer P.S."/>
            <person name="Egan A."/>
            <person name="Galens K."/>
            <person name="Fraser-Liggett C.M."/>
            <person name="Haas B.J."/>
            <person name="Inman J.M."/>
            <person name="Kent R."/>
            <person name="Lemieux S."/>
            <person name="Malavazi I."/>
            <person name="Orvis J."/>
            <person name="Roemer T."/>
            <person name="Ronning C.M."/>
            <person name="Sundaram J.P."/>
            <person name="Sutton G."/>
            <person name="Turner G."/>
            <person name="Venter J.C."/>
            <person name="White O.R."/>
            <person name="Whitty B.R."/>
            <person name="Youngman P."/>
            <person name="Wolfe K.H."/>
            <person name="Goldman G.H."/>
            <person name="Wortman J.R."/>
            <person name="Jiang B."/>
            <person name="Denning D.W."/>
            <person name="Nierman W.C."/>
        </authorList>
    </citation>
    <scope>NUCLEOTIDE SEQUENCE [LARGE SCALE GENOMIC DNA]</scope>
    <source>
        <strain>ATCC 1007 / CBS 513.65 / DSM 816 / NCTC 3887 / NRRL 1 / QM 1276 / 107</strain>
    </source>
</reference>
<organism>
    <name type="scientific">Aspergillus clavatus (strain ATCC 1007 / CBS 513.65 / DSM 816 / NCTC 3887 / NRRL 1 / QM 1276 / 107)</name>
    <dbReference type="NCBI Taxonomy" id="344612"/>
    <lineage>
        <taxon>Eukaryota</taxon>
        <taxon>Fungi</taxon>
        <taxon>Dikarya</taxon>
        <taxon>Ascomycota</taxon>
        <taxon>Pezizomycotina</taxon>
        <taxon>Eurotiomycetes</taxon>
        <taxon>Eurotiomycetidae</taxon>
        <taxon>Eurotiales</taxon>
        <taxon>Aspergillaceae</taxon>
        <taxon>Aspergillus</taxon>
        <taxon>Aspergillus subgen. Fumigati</taxon>
    </lineage>
</organism>
<feature type="chain" id="PRO_0000393321" description="MYND-type zinc finger protein samB">
    <location>
        <begin position="1"/>
        <end position="597"/>
    </location>
</feature>
<feature type="zinc finger region" description="MYND-type; degenerate" evidence="2">
    <location>
        <begin position="552"/>
        <end position="593"/>
    </location>
</feature>
<feature type="region of interest" description="Disordered" evidence="3">
    <location>
        <begin position="133"/>
        <end position="230"/>
    </location>
</feature>
<feature type="region of interest" description="Disordered" evidence="3">
    <location>
        <begin position="268"/>
        <end position="287"/>
    </location>
</feature>
<feature type="region of interest" description="Disordered" evidence="3">
    <location>
        <begin position="292"/>
        <end position="341"/>
    </location>
</feature>
<feature type="compositionally biased region" description="Pro residues" evidence="3">
    <location>
        <begin position="177"/>
        <end position="188"/>
    </location>
</feature>
<feature type="compositionally biased region" description="Basic and acidic residues" evidence="3">
    <location>
        <begin position="214"/>
        <end position="224"/>
    </location>
</feature>
<feature type="compositionally biased region" description="Polar residues" evidence="3">
    <location>
        <begin position="271"/>
        <end position="284"/>
    </location>
</feature>
<feature type="compositionally biased region" description="Acidic residues" evidence="3">
    <location>
        <begin position="312"/>
        <end position="328"/>
    </location>
</feature>
<feature type="binding site" evidence="2">
    <location>
        <position position="568"/>
    </location>
    <ligand>
        <name>Zn(2+)</name>
        <dbReference type="ChEBI" id="CHEBI:29105"/>
    </ligand>
</feature>
<feature type="binding site" evidence="2">
    <location>
        <position position="571"/>
    </location>
    <ligand>
        <name>Zn(2+)</name>
        <dbReference type="ChEBI" id="CHEBI:29105"/>
    </ligand>
</feature>
<feature type="binding site" evidence="2">
    <location>
        <position position="589"/>
    </location>
    <ligand>
        <name>Zn(2+)</name>
        <dbReference type="ChEBI" id="CHEBI:29105"/>
    </ligand>
</feature>
<feature type="binding site" evidence="2">
    <location>
        <position position="593"/>
    </location>
    <ligand>
        <name>Zn(2+)</name>
        <dbReference type="ChEBI" id="CHEBI:29105"/>
    </ligand>
</feature>